<organism>
    <name type="scientific">Streptococcus sanguinis</name>
    <dbReference type="NCBI Taxonomy" id="1305"/>
    <lineage>
        <taxon>Bacteria</taxon>
        <taxon>Bacillati</taxon>
        <taxon>Bacillota</taxon>
        <taxon>Bacilli</taxon>
        <taxon>Lactobacillales</taxon>
        <taxon>Streptococcaceae</taxon>
        <taxon>Streptococcus</taxon>
    </lineage>
</organism>
<feature type="chain" id="PRO_0000174872" description="Co-chaperonin GroES">
    <location>
        <begin position="1"/>
        <end position="93"/>
    </location>
</feature>
<evidence type="ECO:0000255" key="1">
    <source>
        <dbReference type="HAMAP-Rule" id="MF_00580"/>
    </source>
</evidence>
<keyword id="KW-0143">Chaperone</keyword>
<keyword id="KW-0963">Cytoplasm</keyword>
<name>CH10_STRSA</name>
<reference key="1">
    <citation type="journal article" date="2002" name="J. Clin. Microbiol.">
        <title>groESL sequence determination, phylogenetic analysis, and species differentiation for viridans group streptococci.</title>
        <authorList>
            <person name="Teng L.-J."/>
            <person name="Hsueh P.R."/>
            <person name="Tsai J.C."/>
            <person name="Chen P.-W."/>
            <person name="Hsu J.-C."/>
            <person name="Lai H.C."/>
            <person name="Lee C.N."/>
            <person name="Ho S.W."/>
        </authorList>
    </citation>
    <scope>NUCLEOTIDE SEQUENCE [GENOMIC DNA]</scope>
    <source>
        <strain>ATCC 10556 / DSM 20567 / JCM 5708 / LMG 14702 / NCIMB 702064 / NCTC 7863</strain>
    </source>
</reference>
<dbReference type="EMBL" id="AF378197">
    <property type="protein sequence ID" value="AAM46147.1"/>
    <property type="molecule type" value="Genomic_DNA"/>
</dbReference>
<dbReference type="RefSeq" id="WP_002914473.1">
    <property type="nucleotide sequence ID" value="NZ_RJNC01000017.1"/>
</dbReference>
<dbReference type="SMR" id="Q8KJ17"/>
<dbReference type="GeneID" id="48426479"/>
<dbReference type="GO" id="GO:0005737">
    <property type="term" value="C:cytoplasm"/>
    <property type="evidence" value="ECO:0007669"/>
    <property type="project" value="UniProtKB-SubCell"/>
</dbReference>
<dbReference type="GO" id="GO:0005524">
    <property type="term" value="F:ATP binding"/>
    <property type="evidence" value="ECO:0007669"/>
    <property type="project" value="InterPro"/>
</dbReference>
<dbReference type="GO" id="GO:0046872">
    <property type="term" value="F:metal ion binding"/>
    <property type="evidence" value="ECO:0007669"/>
    <property type="project" value="TreeGrafter"/>
</dbReference>
<dbReference type="GO" id="GO:0044183">
    <property type="term" value="F:protein folding chaperone"/>
    <property type="evidence" value="ECO:0007669"/>
    <property type="project" value="InterPro"/>
</dbReference>
<dbReference type="GO" id="GO:0051087">
    <property type="term" value="F:protein-folding chaperone binding"/>
    <property type="evidence" value="ECO:0007669"/>
    <property type="project" value="TreeGrafter"/>
</dbReference>
<dbReference type="GO" id="GO:0051082">
    <property type="term" value="F:unfolded protein binding"/>
    <property type="evidence" value="ECO:0007669"/>
    <property type="project" value="TreeGrafter"/>
</dbReference>
<dbReference type="GO" id="GO:0051085">
    <property type="term" value="P:chaperone cofactor-dependent protein refolding"/>
    <property type="evidence" value="ECO:0007669"/>
    <property type="project" value="TreeGrafter"/>
</dbReference>
<dbReference type="CDD" id="cd00320">
    <property type="entry name" value="cpn10"/>
    <property type="match status" value="1"/>
</dbReference>
<dbReference type="FunFam" id="2.30.33.40:FF:000007">
    <property type="entry name" value="10 kDa chaperonin"/>
    <property type="match status" value="1"/>
</dbReference>
<dbReference type="Gene3D" id="2.30.33.40">
    <property type="entry name" value="GroES chaperonin"/>
    <property type="match status" value="1"/>
</dbReference>
<dbReference type="HAMAP" id="MF_00580">
    <property type="entry name" value="CH10"/>
    <property type="match status" value="1"/>
</dbReference>
<dbReference type="InterPro" id="IPR020818">
    <property type="entry name" value="Chaperonin_GroES"/>
</dbReference>
<dbReference type="InterPro" id="IPR037124">
    <property type="entry name" value="Chaperonin_GroES_sf"/>
</dbReference>
<dbReference type="InterPro" id="IPR018369">
    <property type="entry name" value="Chaprnonin_Cpn10_CS"/>
</dbReference>
<dbReference type="InterPro" id="IPR011032">
    <property type="entry name" value="GroES-like_sf"/>
</dbReference>
<dbReference type="NCBIfam" id="NF001528">
    <property type="entry name" value="PRK00364.1-4"/>
    <property type="match status" value="1"/>
</dbReference>
<dbReference type="PANTHER" id="PTHR10772">
    <property type="entry name" value="10 KDA HEAT SHOCK PROTEIN"/>
    <property type="match status" value="1"/>
</dbReference>
<dbReference type="PANTHER" id="PTHR10772:SF58">
    <property type="entry name" value="CO-CHAPERONIN GROES"/>
    <property type="match status" value="1"/>
</dbReference>
<dbReference type="Pfam" id="PF00166">
    <property type="entry name" value="Cpn10"/>
    <property type="match status" value="1"/>
</dbReference>
<dbReference type="PRINTS" id="PR00297">
    <property type="entry name" value="CHAPERONIN10"/>
</dbReference>
<dbReference type="SMART" id="SM00883">
    <property type="entry name" value="Cpn10"/>
    <property type="match status" value="1"/>
</dbReference>
<dbReference type="SUPFAM" id="SSF50129">
    <property type="entry name" value="GroES-like"/>
    <property type="match status" value="1"/>
</dbReference>
<dbReference type="PROSITE" id="PS00681">
    <property type="entry name" value="CHAPERONINS_CPN10"/>
    <property type="match status" value="1"/>
</dbReference>
<accession>Q8KJ17</accession>
<protein>
    <recommendedName>
        <fullName evidence="1">Co-chaperonin GroES</fullName>
    </recommendedName>
    <alternativeName>
        <fullName evidence="1">10 kDa chaperonin</fullName>
    </alternativeName>
    <alternativeName>
        <fullName evidence="1">Chaperonin-10</fullName>
        <shortName evidence="1">Cpn10</shortName>
    </alternativeName>
</protein>
<proteinExistence type="inferred from homology"/>
<comment type="function">
    <text evidence="1">Together with the chaperonin GroEL, plays an essential role in assisting protein folding. The GroEL-GroES system forms a nano-cage that allows encapsulation of the non-native substrate proteins and provides a physical environment optimized to promote and accelerate protein folding. GroES binds to the apical surface of the GroEL ring, thereby capping the opening of the GroEL channel.</text>
</comment>
<comment type="subunit">
    <text evidence="1">Heptamer of 7 subunits arranged in a ring. Interacts with the chaperonin GroEL.</text>
</comment>
<comment type="subcellular location">
    <subcellularLocation>
        <location evidence="1">Cytoplasm</location>
    </subcellularLocation>
</comment>
<comment type="similarity">
    <text evidence="1">Belongs to the GroES chaperonin family.</text>
</comment>
<sequence length="93" mass="9755">MLKPLGDRVVLKVEEKEQKVGGFVIAGNGQAATKTAEVVAVGQGIRTLNGELVSLSVKEGEKVLVENHAGVEVKDGDEAYLLVSEANILAVVE</sequence>
<gene>
    <name evidence="1" type="primary">groES</name>
    <name evidence="1" type="synonym">groS</name>
</gene>